<evidence type="ECO:0000255" key="1">
    <source>
        <dbReference type="PROSITE-ProRule" id="PRU00238"/>
    </source>
</evidence>
<evidence type="ECO:0000269" key="2">
    <source>
    </source>
</evidence>
<evidence type="ECO:0000269" key="3">
    <source>
    </source>
</evidence>
<evidence type="ECO:0000305" key="4"/>
<evidence type="ECO:0007829" key="5">
    <source>
        <dbReference type="PDB" id="2D2M"/>
    </source>
</evidence>
<evidence type="ECO:0007829" key="6">
    <source>
        <dbReference type="PDB" id="2D2N"/>
    </source>
</evidence>
<dbReference type="EMBL" id="AB185394">
    <property type="protein sequence ID" value="BAD86545.1"/>
    <property type="molecule type" value="mRNA"/>
</dbReference>
<dbReference type="PDB" id="2D2M">
    <property type="method" value="X-ray"/>
    <property type="resolution" value="2.85 A"/>
    <property type="chains" value="D=17-161"/>
</dbReference>
<dbReference type="PDB" id="2D2N">
    <property type="method" value="X-ray"/>
    <property type="resolution" value="3.20 A"/>
    <property type="chains" value="D=17-161"/>
</dbReference>
<dbReference type="PDB" id="2ZFO">
    <property type="method" value="X-ray"/>
    <property type="resolution" value="1.95 A"/>
    <property type="chains" value="D=17-161"/>
</dbReference>
<dbReference type="PDB" id="2ZS0">
    <property type="method" value="X-ray"/>
    <property type="resolution" value="1.60 A"/>
    <property type="chains" value="D=17-161"/>
</dbReference>
<dbReference type="PDB" id="2ZS1">
    <property type="method" value="X-ray"/>
    <property type="resolution" value="1.70 A"/>
    <property type="chains" value="D=17-161"/>
</dbReference>
<dbReference type="PDBsum" id="2D2M"/>
<dbReference type="PDBsum" id="2D2N"/>
<dbReference type="PDBsum" id="2ZFO"/>
<dbReference type="PDBsum" id="2ZS0"/>
<dbReference type="PDBsum" id="2ZS1"/>
<dbReference type="SMR" id="Q5KSB7"/>
<dbReference type="EvolutionaryTrace" id="Q5KSB7"/>
<dbReference type="GO" id="GO:0005576">
    <property type="term" value="C:extracellular region"/>
    <property type="evidence" value="ECO:0007669"/>
    <property type="project" value="UniProtKB-SubCell"/>
</dbReference>
<dbReference type="GO" id="GO:0005833">
    <property type="term" value="C:hemoglobin complex"/>
    <property type="evidence" value="ECO:0007669"/>
    <property type="project" value="InterPro"/>
</dbReference>
<dbReference type="GO" id="GO:0020037">
    <property type="term" value="F:heme binding"/>
    <property type="evidence" value="ECO:0007669"/>
    <property type="project" value="InterPro"/>
</dbReference>
<dbReference type="GO" id="GO:0005506">
    <property type="term" value="F:iron ion binding"/>
    <property type="evidence" value="ECO:0007669"/>
    <property type="project" value="InterPro"/>
</dbReference>
<dbReference type="GO" id="GO:0019825">
    <property type="term" value="F:oxygen binding"/>
    <property type="evidence" value="ECO:0007669"/>
    <property type="project" value="InterPro"/>
</dbReference>
<dbReference type="GO" id="GO:0005344">
    <property type="term" value="F:oxygen carrier activity"/>
    <property type="evidence" value="ECO:0007669"/>
    <property type="project" value="UniProtKB-KW"/>
</dbReference>
<dbReference type="CDD" id="cd01040">
    <property type="entry name" value="Mb-like"/>
    <property type="match status" value="1"/>
</dbReference>
<dbReference type="Gene3D" id="1.10.490.10">
    <property type="entry name" value="Globins"/>
    <property type="match status" value="1"/>
</dbReference>
<dbReference type="InterPro" id="IPR000971">
    <property type="entry name" value="Globin"/>
</dbReference>
<dbReference type="InterPro" id="IPR009050">
    <property type="entry name" value="Globin-like_sf"/>
</dbReference>
<dbReference type="InterPro" id="IPR012292">
    <property type="entry name" value="Globin/Proto"/>
</dbReference>
<dbReference type="InterPro" id="IPR014610">
    <property type="entry name" value="Haemoglobin_extracell"/>
</dbReference>
<dbReference type="InterPro" id="IPR044399">
    <property type="entry name" value="Mb-like_M"/>
</dbReference>
<dbReference type="Pfam" id="PF00042">
    <property type="entry name" value="Globin"/>
    <property type="match status" value="1"/>
</dbReference>
<dbReference type="PIRSF" id="PIRSF036517">
    <property type="entry name" value="Ext_hemo"/>
    <property type="match status" value="1"/>
</dbReference>
<dbReference type="SUPFAM" id="SSF46458">
    <property type="entry name" value="Globin-like"/>
    <property type="match status" value="1"/>
</dbReference>
<dbReference type="PROSITE" id="PS01033">
    <property type="entry name" value="GLOBIN"/>
    <property type="match status" value="1"/>
</dbReference>
<accession>Q5KSB7</accession>
<proteinExistence type="evidence at protein level"/>
<feature type="signal peptide" evidence="2">
    <location>
        <begin position="1"/>
        <end position="16"/>
    </location>
</feature>
<feature type="chain" id="PRO_5000051511" description="Extracellular giant hemoglobin major globin subunit B1">
    <location>
        <begin position="17"/>
        <end position="161"/>
    </location>
</feature>
<feature type="domain" description="Globin" evidence="1">
    <location>
        <begin position="18"/>
        <end position="161"/>
    </location>
</feature>
<feature type="binding site" description="proximal binding residue">
    <location>
        <position position="112"/>
    </location>
    <ligand>
        <name>heme b</name>
        <dbReference type="ChEBI" id="CHEBI:60344"/>
    </ligand>
    <ligandPart>
        <name>Fe</name>
        <dbReference type="ChEBI" id="CHEBI:18248"/>
    </ligandPart>
</feature>
<feature type="disulfide bond" description="Interchain (with C-19 in subunit B2)" evidence="3">
    <location>
        <position position="18"/>
    </location>
</feature>
<feature type="disulfide bond" evidence="3">
    <location>
        <begin position="19"/>
        <end position="149"/>
    </location>
</feature>
<feature type="sequence conflict" description="In Ref. 1; AA sequence." evidence="4" ref="1">
    <original>V</original>
    <variation>K</variation>
    <location>
        <position position="27"/>
    </location>
</feature>
<feature type="helix" evidence="5">
    <location>
        <begin position="21"/>
        <end position="34"/>
    </location>
</feature>
<feature type="turn" evidence="5">
    <location>
        <begin position="37"/>
        <end position="42"/>
    </location>
</feature>
<feature type="helix" evidence="5">
    <location>
        <begin position="44"/>
        <end position="59"/>
    </location>
</feature>
<feature type="helix" evidence="6">
    <location>
        <begin position="63"/>
        <end position="65"/>
    </location>
</feature>
<feature type="helix" evidence="5">
    <location>
        <begin position="67"/>
        <end position="69"/>
    </location>
</feature>
<feature type="helix" evidence="5">
    <location>
        <begin position="75"/>
        <end position="92"/>
    </location>
</feature>
<feature type="turn" evidence="5">
    <location>
        <begin position="93"/>
        <end position="96"/>
    </location>
</feature>
<feature type="helix" evidence="5">
    <location>
        <begin position="98"/>
        <end position="113"/>
    </location>
</feature>
<feature type="helix" evidence="5">
    <location>
        <begin position="120"/>
        <end position="137"/>
    </location>
</feature>
<feature type="helix" evidence="5">
    <location>
        <begin position="143"/>
        <end position="157"/>
    </location>
</feature>
<gene>
    <name type="primary">ghbB1</name>
</gene>
<protein>
    <recommendedName>
        <fullName>Extracellular giant hemoglobin major globin subunit B1</fullName>
    </recommendedName>
    <alternativeName>
        <fullName>Major globin chain d</fullName>
    </alternativeName>
</protein>
<comment type="function">
    <text>The extracellular giant hemoglobin is able to bind and transport oxygen and sulfide simultaneously and reversibly at two different sites.</text>
</comment>
<comment type="subunit">
    <text evidence="3">The 400 kDa hemoglobin consists of a spherical 24-mer arranged as a double layer of dome-shaped dodecamers. Each dodecamer is composed of the 3-fold trimer of the tetramer A1-A2-B1-B2 having one intra-tetramer (A1-B2) disulfide bond and one inter-tetramer (B1-B2) disulfide bond per tetramer.</text>
</comment>
<comment type="subcellular location">
    <subcellularLocation>
        <location>Secreted</location>
    </subcellularLocation>
</comment>
<comment type="similarity">
    <text evidence="1">Belongs to the globin family.</text>
</comment>
<reference key="1">
    <citation type="journal article" date="2005" name="Zool. Sci.">
        <title>Purification, characterization and sequence analyses of the extracellular giant hemoglobin from Oligobrachia mashikoi.</title>
        <authorList>
            <person name="Nakagawa T."/>
            <person name="Onoda S."/>
            <person name="Kanemori M."/>
            <person name="Sasayama Y."/>
            <person name="Fukumori Y."/>
        </authorList>
    </citation>
    <scope>NUCLEOTIDE SEQUENCE [MRNA]</scope>
    <scope>PROTEIN SEQUENCE OF 17-36</scope>
</reference>
<reference key="2">
    <citation type="journal article" date="2005" name="Proc. Natl. Acad. Sci. U.S.A.">
        <title>Structure of an extracellular giant hemoglobin of the gutless beard worm Oligobrachia mashikoi.</title>
        <authorList>
            <person name="Numoto N."/>
            <person name="Nakagawa T."/>
            <person name="Kita A."/>
            <person name="Sasayama Y."/>
            <person name="Fukumori Y."/>
            <person name="Miki K."/>
        </authorList>
    </citation>
    <scope>X-RAY CRYSTALLOGRAPHY (2.85 ANGSTROMS) OF 17-161</scope>
    <scope>SUBUNIT</scope>
    <scope>METAL</scope>
    <scope>DISULFIDE BONDS</scope>
</reference>
<organism>
    <name type="scientific">Oligobrachia mashikoi</name>
    <name type="common">Beard worm</name>
    <dbReference type="NCBI Taxonomy" id="55676"/>
    <lineage>
        <taxon>Eukaryota</taxon>
        <taxon>Metazoa</taxon>
        <taxon>Spiralia</taxon>
        <taxon>Lophotrochozoa</taxon>
        <taxon>Annelida</taxon>
        <taxon>Polychaeta</taxon>
        <taxon>Sedentaria</taxon>
        <taxon>Canalipalpata</taxon>
        <taxon>Sabellida</taxon>
        <taxon>Siboglinidae</taxon>
        <taxon>Oligobrachia</taxon>
    </lineage>
</organism>
<keyword id="KW-0002">3D-structure</keyword>
<keyword id="KW-0903">Direct protein sequencing</keyword>
<keyword id="KW-1015">Disulfide bond</keyword>
<keyword id="KW-0349">Heme</keyword>
<keyword id="KW-0408">Iron</keyword>
<keyword id="KW-0479">Metal-binding</keyword>
<keyword id="KW-0561">Oxygen transport</keyword>
<keyword id="KW-0964">Secreted</keyword>
<keyword id="KW-0732">Signal</keyword>
<keyword id="KW-0813">Transport</keyword>
<sequence>MTILVLFLSCAALASAECCSRGDAEVVISEWDQVFNAAMAGSSESAVGVAIFDAFFASSGVSPSMFPGGGDSNNPEFLAQVSRVVSGADIAINSLTNRATCDSLLSHLNAQHRAISGVTGAAVTHLSQAISSVVAQVLPSAHIDAWEYCMAYIAAGIGAGL</sequence>
<name>GLBB1_OLIMA</name>